<comment type="function">
    <text evidence="1">Major structural protein of the hrp pilus, which is a component of the type III secretion system (T3SS, Hrp secretion system) required for effector protein delivery, parasitism, and pathogenicity. The hrp pilus functions as a conduit for protein delivery into the host cell. Also, affects the expression of T3SS-associated genes. Required for full expression of genes that encode regulatory, secretion, and effector proteins of the T3SS. HrpA-mediated gene regulation apparently is through effect on the mRNA level of hrpR and hrpS (By similarity).</text>
</comment>
<comment type="subcellular location">
    <subcellularLocation>
        <location evidence="1">Secreted</location>
    </subcellularLocation>
    <subcellularLocation>
        <location evidence="1">Fimbrium</location>
    </subcellularLocation>
    <text evidence="1">Extracellular and secreted via type III secretion system.</text>
</comment>
<comment type="induction">
    <text evidence="1">Expression enhanced by contact with host cell wall. Also regulated by HrpRS and HrpL (By similarity).</text>
</comment>
<comment type="similarity">
    <text evidence="3">Belongs to the HrpA type 1 family.</text>
</comment>
<name>HRPA_PSESG</name>
<keyword id="KW-0281">Fimbrium</keyword>
<keyword id="KW-0964">Secreted</keyword>
<keyword id="KW-0843">Virulence</keyword>
<protein>
    <recommendedName>
        <fullName>Hrp pili protein HrpA</fullName>
    </recommendedName>
    <alternativeName>
        <fullName>T3SS pilin HrpA</fullName>
    </alternativeName>
</protein>
<feature type="chain" id="PRO_0000219572" description="Hrp pili protein HrpA">
    <location>
        <begin position="1"/>
        <end position="108"/>
    </location>
</feature>
<feature type="region of interest" description="Disordered" evidence="2">
    <location>
        <begin position="41"/>
        <end position="73"/>
    </location>
</feature>
<feature type="compositionally biased region" description="Polar residues" evidence="2">
    <location>
        <begin position="41"/>
        <end position="56"/>
    </location>
</feature>
<feature type="sequence variant" description="In strain: r0.">
    <original>P</original>
    <variation>K</variation>
    <location>
        <position position="61"/>
    </location>
</feature>
<organism>
    <name type="scientific">Pseudomonas savastanoi pv. glycinea</name>
    <name type="common">Pseudomonas syringae pv. glycinea</name>
    <dbReference type="NCBI Taxonomy" id="318"/>
    <lineage>
        <taxon>Bacteria</taxon>
        <taxon>Pseudomonadati</taxon>
        <taxon>Pseudomonadota</taxon>
        <taxon>Gammaproteobacteria</taxon>
        <taxon>Pseudomonadales</taxon>
        <taxon>Pseudomonadaceae</taxon>
        <taxon>Pseudomonas</taxon>
    </lineage>
</organism>
<gene>
    <name type="primary">hrpA</name>
</gene>
<dbReference type="EMBL" id="L41862">
    <property type="protein sequence ID" value="AAB00135.1"/>
    <property type="molecule type" value="Genomic_DNA"/>
</dbReference>
<dbReference type="EMBL" id="AB112554">
    <property type="protein sequence ID" value="BAD20827.1"/>
    <property type="molecule type" value="Genomic_DNA"/>
</dbReference>
<dbReference type="SMR" id="Q52480"/>
<dbReference type="GO" id="GO:0005576">
    <property type="term" value="C:extracellular region"/>
    <property type="evidence" value="ECO:0007669"/>
    <property type="project" value="UniProtKB-SubCell"/>
</dbReference>
<dbReference type="GO" id="GO:0009289">
    <property type="term" value="C:pilus"/>
    <property type="evidence" value="ECO:0007669"/>
    <property type="project" value="UniProtKB-SubCell"/>
</dbReference>
<evidence type="ECO:0000250" key="1"/>
<evidence type="ECO:0000256" key="2">
    <source>
        <dbReference type="SAM" id="MobiDB-lite"/>
    </source>
</evidence>
<evidence type="ECO:0000305" key="3"/>
<sequence>MSIISSLTNAGRGVVNTVGGAAQGINSVKSSADRNIALTKNTGSTDSIDATRSSISKGDAPSAELDGTANEENGLLRETSMLAGFEDKKEALSNQIVASKIRNSVVQF</sequence>
<proteinExistence type="inferred from homology"/>
<accession>Q52480</accession>
<accession>Q6L954</accession>
<reference key="1">
    <citation type="journal article" date="1995" name="Mol. Plant Microbe Interact.">
        <title>The HrpZ proteins of Pseudomonas syringae pvs. syringae, glycinea, and tomato are encoded by an operon containing Yersinia ysc homologs and elicit the hypersensitive response in tomato but not soybean.</title>
        <authorList>
            <person name="Preston G."/>
            <person name="Huang H.-C."/>
            <person name="He S.Y."/>
            <person name="Collmer A."/>
        </authorList>
    </citation>
    <scope>NUCLEOTIDE SEQUENCE [GENOMIC DNA]</scope>
    <source>
        <strain>Race 4</strain>
    </source>
</reference>
<reference key="2">
    <citation type="submission" date="2003-06" db="EMBL/GenBank/DDBJ databases">
        <title>Phylogenic analysis of DNA sequences around the hrpZ regions of Pseudomonas syringae.</title>
        <authorList>
            <person name="Inoue Y."/>
            <person name="Takikawa Y."/>
        </authorList>
    </citation>
    <scope>NUCLEOTIDE SEQUENCE [GENOMIC DNA]</scope>
    <source>
        <strain>r0</strain>
    </source>
</reference>